<keyword id="KW-0997">Cell inner membrane</keyword>
<keyword id="KW-1003">Cell membrane</keyword>
<keyword id="KW-0472">Membrane</keyword>
<keyword id="KW-0520">NAD</keyword>
<keyword id="KW-0874">Quinone</keyword>
<keyword id="KW-1278">Translocase</keyword>
<keyword id="KW-0813">Transport</keyword>
<keyword id="KW-0830">Ubiquinone</keyword>
<name>NUOD_RICCK</name>
<sequence>MTNNIKTITLNLGPQHPATHGVLRLILEMDGEVVNNTDPHIGLLHRGTEKLIEHKTYLQAIPYFDRLDYVSPMCQEHAFALAVESLLKCEVPRRAQFIRVLFSELTRILNHTLNIGSQALDIGATTPLLWLFEEREKIMEFYERVSGSRMHSNYFRPGGVAEDLPDGLLEDIDKFIEQFHPKLQDVESLLNENRLWKQRLVDIGVVLQQEAMEWGFSGPMLRGSGIAWDLRKSNPYDVYDEIDFEVPIGKNGDCYDRYLVRILEMYESIKIIKQCIEKMPKGAVKTNDPKLTPPTRAKMKESMEAMIHHFKLYTEGYEVPAGETYKAVEAPKGEFGVYLYSIGNNQPYRCRIKTPGFAHLQGLNFMSKGHLMADVITIIATLDIVFGEIDR</sequence>
<dbReference type="EC" id="7.1.1.-" evidence="1"/>
<dbReference type="EMBL" id="CP000409">
    <property type="protein sequence ID" value="ABV73669.1"/>
    <property type="status" value="ALT_INIT"/>
    <property type="molecule type" value="Genomic_DNA"/>
</dbReference>
<dbReference type="RefSeq" id="WP_014364031.1">
    <property type="nucleotide sequence ID" value="NC_009879.1"/>
</dbReference>
<dbReference type="SMR" id="A8EZ86"/>
<dbReference type="STRING" id="293613.A1E_03690"/>
<dbReference type="KEGG" id="rcm:A1E_03690"/>
<dbReference type="eggNOG" id="COG0649">
    <property type="taxonomic scope" value="Bacteria"/>
</dbReference>
<dbReference type="HOGENOM" id="CLU_015134_1_1_5"/>
<dbReference type="Proteomes" id="UP000007056">
    <property type="component" value="Chromosome"/>
</dbReference>
<dbReference type="GO" id="GO:0005886">
    <property type="term" value="C:plasma membrane"/>
    <property type="evidence" value="ECO:0007669"/>
    <property type="project" value="UniProtKB-SubCell"/>
</dbReference>
<dbReference type="GO" id="GO:0051287">
    <property type="term" value="F:NAD binding"/>
    <property type="evidence" value="ECO:0007669"/>
    <property type="project" value="InterPro"/>
</dbReference>
<dbReference type="GO" id="GO:0050136">
    <property type="term" value="F:NADH:ubiquinone reductase (non-electrogenic) activity"/>
    <property type="evidence" value="ECO:0007669"/>
    <property type="project" value="UniProtKB-UniRule"/>
</dbReference>
<dbReference type="GO" id="GO:0048038">
    <property type="term" value="F:quinone binding"/>
    <property type="evidence" value="ECO:0007669"/>
    <property type="project" value="UniProtKB-KW"/>
</dbReference>
<dbReference type="FunFam" id="1.10.645.10:FF:000005">
    <property type="entry name" value="NADH-quinone oxidoreductase subunit D"/>
    <property type="match status" value="1"/>
</dbReference>
<dbReference type="Gene3D" id="1.10.645.10">
    <property type="entry name" value="Cytochrome-c3 Hydrogenase, chain B"/>
    <property type="match status" value="1"/>
</dbReference>
<dbReference type="HAMAP" id="MF_01358">
    <property type="entry name" value="NDH1_NuoD"/>
    <property type="match status" value="1"/>
</dbReference>
<dbReference type="InterPro" id="IPR001135">
    <property type="entry name" value="NADH_Q_OxRdtase_suD"/>
</dbReference>
<dbReference type="InterPro" id="IPR014029">
    <property type="entry name" value="NADH_UbQ_OxRdtase_49kDa_CS"/>
</dbReference>
<dbReference type="InterPro" id="IPR022885">
    <property type="entry name" value="NDH1_su_D/H"/>
</dbReference>
<dbReference type="InterPro" id="IPR029014">
    <property type="entry name" value="NiFe-Hase_large"/>
</dbReference>
<dbReference type="NCBIfam" id="TIGR01962">
    <property type="entry name" value="NuoD"/>
    <property type="match status" value="1"/>
</dbReference>
<dbReference type="NCBIfam" id="NF004739">
    <property type="entry name" value="PRK06075.1"/>
    <property type="match status" value="1"/>
</dbReference>
<dbReference type="PANTHER" id="PTHR11993:SF10">
    <property type="entry name" value="NADH DEHYDROGENASE [UBIQUINONE] IRON-SULFUR PROTEIN 2, MITOCHONDRIAL"/>
    <property type="match status" value="1"/>
</dbReference>
<dbReference type="PANTHER" id="PTHR11993">
    <property type="entry name" value="NADH-UBIQUINONE OXIDOREDUCTASE 49 KDA SUBUNIT"/>
    <property type="match status" value="1"/>
</dbReference>
<dbReference type="Pfam" id="PF00346">
    <property type="entry name" value="Complex1_49kDa"/>
    <property type="match status" value="1"/>
</dbReference>
<dbReference type="SUPFAM" id="SSF56762">
    <property type="entry name" value="HydB/Nqo4-like"/>
    <property type="match status" value="1"/>
</dbReference>
<dbReference type="PROSITE" id="PS00535">
    <property type="entry name" value="COMPLEX1_49K"/>
    <property type="match status" value="1"/>
</dbReference>
<comment type="function">
    <text evidence="1">NDH-1 shuttles electrons from NADH, via FMN and iron-sulfur (Fe-S) centers, to quinones in the respiratory chain. The immediate electron acceptor for the enzyme in this species is believed to be ubiquinone. Couples the redox reaction to proton translocation (for every two electrons transferred, four hydrogen ions are translocated across the cytoplasmic membrane), and thus conserves the redox energy in a proton gradient.</text>
</comment>
<comment type="catalytic activity">
    <reaction evidence="1">
        <text>a quinone + NADH + 5 H(+)(in) = a quinol + NAD(+) + 4 H(+)(out)</text>
        <dbReference type="Rhea" id="RHEA:57888"/>
        <dbReference type="ChEBI" id="CHEBI:15378"/>
        <dbReference type="ChEBI" id="CHEBI:24646"/>
        <dbReference type="ChEBI" id="CHEBI:57540"/>
        <dbReference type="ChEBI" id="CHEBI:57945"/>
        <dbReference type="ChEBI" id="CHEBI:132124"/>
    </reaction>
</comment>
<comment type="subunit">
    <text evidence="1">NDH-1 is composed of 14 different subunits. Subunits NuoB, C, D, E, F, and G constitute the peripheral sector of the complex.</text>
</comment>
<comment type="subcellular location">
    <subcellularLocation>
        <location evidence="1">Cell inner membrane</location>
        <topology evidence="1">Peripheral membrane protein</topology>
        <orientation evidence="1">Cytoplasmic side</orientation>
    </subcellularLocation>
</comment>
<comment type="similarity">
    <text evidence="1">Belongs to the complex I 49 kDa subunit family.</text>
</comment>
<comment type="sequence caution" evidence="2">
    <conflict type="erroneous initiation">
        <sequence resource="EMBL-CDS" id="ABV73669"/>
    </conflict>
</comment>
<accession>A8EZ86</accession>
<proteinExistence type="inferred from homology"/>
<feature type="chain" id="PRO_0000357912" description="NADH-quinone oxidoreductase subunit D">
    <location>
        <begin position="1"/>
        <end position="391"/>
    </location>
</feature>
<organism>
    <name type="scientific">Rickettsia canadensis (strain McKiel)</name>
    <dbReference type="NCBI Taxonomy" id="293613"/>
    <lineage>
        <taxon>Bacteria</taxon>
        <taxon>Pseudomonadati</taxon>
        <taxon>Pseudomonadota</taxon>
        <taxon>Alphaproteobacteria</taxon>
        <taxon>Rickettsiales</taxon>
        <taxon>Rickettsiaceae</taxon>
        <taxon>Rickettsieae</taxon>
        <taxon>Rickettsia</taxon>
        <taxon>belli group</taxon>
    </lineage>
</organism>
<evidence type="ECO:0000255" key="1">
    <source>
        <dbReference type="HAMAP-Rule" id="MF_01358"/>
    </source>
</evidence>
<evidence type="ECO:0000305" key="2"/>
<gene>
    <name evidence="1" type="primary">nuoD</name>
    <name type="ordered locus">A1E_03690</name>
</gene>
<protein>
    <recommendedName>
        <fullName evidence="1">NADH-quinone oxidoreductase subunit D</fullName>
        <ecNumber evidence="1">7.1.1.-</ecNumber>
    </recommendedName>
    <alternativeName>
        <fullName evidence="1">NADH dehydrogenase I subunit D</fullName>
    </alternativeName>
    <alternativeName>
        <fullName evidence="1">NDH-1 subunit D</fullName>
    </alternativeName>
</protein>
<reference key="1">
    <citation type="submission" date="2007-09" db="EMBL/GenBank/DDBJ databases">
        <title>Complete genome sequence of Rickettsia canadensis.</title>
        <authorList>
            <person name="Madan A."/>
            <person name="Fahey J."/>
            <person name="Helton E."/>
            <person name="Ketteman M."/>
            <person name="Madan A."/>
            <person name="Rodrigues S."/>
            <person name="Sanchez A."/>
            <person name="Whiting M."/>
            <person name="Dasch G."/>
            <person name="Eremeeva M."/>
        </authorList>
    </citation>
    <scope>NUCLEOTIDE SEQUENCE [LARGE SCALE GENOMIC DNA]</scope>
    <source>
        <strain>McKiel</strain>
    </source>
</reference>